<gene>
    <name evidence="1" type="primary">scpB</name>
    <name type="ordered locus">SP_1875</name>
</gene>
<name>SCPB_STRPN</name>
<evidence type="ECO:0000255" key="1">
    <source>
        <dbReference type="HAMAP-Rule" id="MF_01804"/>
    </source>
</evidence>
<dbReference type="EMBL" id="AE005672">
    <property type="protein sequence ID" value="AAK75947.1"/>
    <property type="molecule type" value="Genomic_DNA"/>
</dbReference>
<dbReference type="PIR" id="B95219">
    <property type="entry name" value="B95219"/>
</dbReference>
<dbReference type="RefSeq" id="WP_000105310.1">
    <property type="nucleotide sequence ID" value="NZ_CP155539.1"/>
</dbReference>
<dbReference type="SMR" id="Q97NX6"/>
<dbReference type="IntAct" id="Q97NX6">
    <property type="interactions" value="9"/>
</dbReference>
<dbReference type="PaxDb" id="170187-SP_1875"/>
<dbReference type="EnsemblBacteria" id="AAK75947">
    <property type="protein sequence ID" value="AAK75947"/>
    <property type="gene ID" value="SP_1875"/>
</dbReference>
<dbReference type="GeneID" id="45219111"/>
<dbReference type="KEGG" id="spn:SP_1875"/>
<dbReference type="eggNOG" id="COG1386">
    <property type="taxonomic scope" value="Bacteria"/>
</dbReference>
<dbReference type="PhylomeDB" id="Q97NX6"/>
<dbReference type="BioCyc" id="SPNE170187:G1FZB-1905-MONOMER"/>
<dbReference type="Proteomes" id="UP000000585">
    <property type="component" value="Chromosome"/>
</dbReference>
<dbReference type="GO" id="GO:0005737">
    <property type="term" value="C:cytoplasm"/>
    <property type="evidence" value="ECO:0007669"/>
    <property type="project" value="UniProtKB-SubCell"/>
</dbReference>
<dbReference type="GO" id="GO:0042802">
    <property type="term" value="F:identical protein binding"/>
    <property type="evidence" value="ECO:0000353"/>
    <property type="project" value="IntAct"/>
</dbReference>
<dbReference type="GO" id="GO:0051301">
    <property type="term" value="P:cell division"/>
    <property type="evidence" value="ECO:0007669"/>
    <property type="project" value="UniProtKB-KW"/>
</dbReference>
<dbReference type="GO" id="GO:0051304">
    <property type="term" value="P:chromosome separation"/>
    <property type="evidence" value="ECO:0007669"/>
    <property type="project" value="InterPro"/>
</dbReference>
<dbReference type="GO" id="GO:0006260">
    <property type="term" value="P:DNA replication"/>
    <property type="evidence" value="ECO:0007669"/>
    <property type="project" value="UniProtKB-UniRule"/>
</dbReference>
<dbReference type="FunFam" id="1.10.10.10:FF:000507">
    <property type="entry name" value="Segregation and condensation protein B"/>
    <property type="match status" value="1"/>
</dbReference>
<dbReference type="FunFam" id="1.10.10.10:FF:000508">
    <property type="entry name" value="Segregation and condensation protein B"/>
    <property type="match status" value="1"/>
</dbReference>
<dbReference type="Gene3D" id="1.10.10.10">
    <property type="entry name" value="Winged helix-like DNA-binding domain superfamily/Winged helix DNA-binding domain"/>
    <property type="match status" value="2"/>
</dbReference>
<dbReference type="HAMAP" id="MF_01804">
    <property type="entry name" value="ScpB"/>
    <property type="match status" value="1"/>
</dbReference>
<dbReference type="InterPro" id="IPR005234">
    <property type="entry name" value="ScpB_csome_segregation"/>
</dbReference>
<dbReference type="InterPro" id="IPR036388">
    <property type="entry name" value="WH-like_DNA-bd_sf"/>
</dbReference>
<dbReference type="InterPro" id="IPR036390">
    <property type="entry name" value="WH_DNA-bd_sf"/>
</dbReference>
<dbReference type="NCBIfam" id="TIGR00281">
    <property type="entry name" value="SMC-Scp complex subunit ScpB"/>
    <property type="match status" value="1"/>
</dbReference>
<dbReference type="PANTHER" id="PTHR34298">
    <property type="entry name" value="SEGREGATION AND CONDENSATION PROTEIN B"/>
    <property type="match status" value="1"/>
</dbReference>
<dbReference type="PANTHER" id="PTHR34298:SF2">
    <property type="entry name" value="SEGREGATION AND CONDENSATION PROTEIN B"/>
    <property type="match status" value="1"/>
</dbReference>
<dbReference type="Pfam" id="PF04079">
    <property type="entry name" value="SMC_ScpB"/>
    <property type="match status" value="1"/>
</dbReference>
<dbReference type="PIRSF" id="PIRSF019345">
    <property type="entry name" value="ScpB"/>
    <property type="match status" value="1"/>
</dbReference>
<dbReference type="SUPFAM" id="SSF46785">
    <property type="entry name" value="Winged helix' DNA-binding domain"/>
    <property type="match status" value="2"/>
</dbReference>
<keyword id="KW-0131">Cell cycle</keyword>
<keyword id="KW-0132">Cell division</keyword>
<keyword id="KW-0159">Chromosome partition</keyword>
<keyword id="KW-0963">Cytoplasm</keyword>
<keyword id="KW-1185">Reference proteome</keyword>
<protein>
    <recommendedName>
        <fullName evidence="1">Segregation and condensation protein B</fullName>
    </recommendedName>
</protein>
<sequence>MSTLAKIEALLFVAGEDGIRVRQLAELLSLPPTGIQQSLGKLAQKYEKDPDSSLALIETSGAYRLVTKPQFAEILKEYSKAPINQSLSRAALETLSIIAYKQPITRIEIDAIRGVNSSGALAKLQAFDLIKEDGKKEVLGRPNLYVTTDYFLDYMGINHLEELPVIDELEIQAQESQLFGERIEEDENQ</sequence>
<proteinExistence type="evidence at protein level"/>
<reference key="1">
    <citation type="journal article" date="2001" name="Science">
        <title>Complete genome sequence of a virulent isolate of Streptococcus pneumoniae.</title>
        <authorList>
            <person name="Tettelin H."/>
            <person name="Nelson K.E."/>
            <person name="Paulsen I.T."/>
            <person name="Eisen J.A."/>
            <person name="Read T.D."/>
            <person name="Peterson S.N."/>
            <person name="Heidelberg J.F."/>
            <person name="DeBoy R.T."/>
            <person name="Haft D.H."/>
            <person name="Dodson R.J."/>
            <person name="Durkin A.S."/>
            <person name="Gwinn M.L."/>
            <person name="Kolonay J.F."/>
            <person name="Nelson W.C."/>
            <person name="Peterson J.D."/>
            <person name="Umayam L.A."/>
            <person name="White O."/>
            <person name="Salzberg S.L."/>
            <person name="Lewis M.R."/>
            <person name="Radune D."/>
            <person name="Holtzapple E.K."/>
            <person name="Khouri H.M."/>
            <person name="Wolf A.M."/>
            <person name="Utterback T.R."/>
            <person name="Hansen C.L."/>
            <person name="McDonald L.A."/>
            <person name="Feldblyum T.V."/>
            <person name="Angiuoli S.V."/>
            <person name="Dickinson T."/>
            <person name="Hickey E.K."/>
            <person name="Holt I.E."/>
            <person name="Loftus B.J."/>
            <person name="Yang F."/>
            <person name="Smith H.O."/>
            <person name="Venter J.C."/>
            <person name="Dougherty B.A."/>
            <person name="Morrison D.A."/>
            <person name="Hollingshead S.K."/>
            <person name="Fraser C.M."/>
        </authorList>
    </citation>
    <scope>NUCLEOTIDE SEQUENCE [LARGE SCALE GENOMIC DNA]</scope>
    <source>
        <strain>ATCC BAA-334 / TIGR4</strain>
    </source>
</reference>
<feature type="chain" id="PRO_0000211159" description="Segregation and condensation protein B">
    <location>
        <begin position="1"/>
        <end position="189"/>
    </location>
</feature>
<comment type="function">
    <text evidence="1">Participates in chromosomal partition during cell division. May act via the formation of a condensin-like complex containing Smc and ScpA that pull DNA away from mid-cell into both cell halves.</text>
</comment>
<comment type="subunit">
    <text evidence="1">Homodimer. Homodimerization may be required to stabilize the binding of ScpA to the Smc head domains. Component of a cohesin-like complex composed of ScpA, ScpB and the Smc homodimer, in which ScpA and ScpB bind to the head domain of Smc. The presence of the three proteins is required for the association of the complex with DNA.</text>
</comment>
<comment type="interaction">
    <interactant intactId="EBI-2206697">
        <id>Q97NX6</id>
    </interactant>
    <interactant intactId="EBI-2206969">
        <id>Q97SU1</id>
        <label>adk</label>
    </interactant>
    <organismsDiffer>false</organismsDiffer>
    <experiments>2</experiments>
</comment>
<comment type="interaction">
    <interactant intactId="EBI-2206697">
        <id>Q97NX6</id>
    </interactant>
    <interactant intactId="EBI-2207290">
        <id>P63588</id>
        <label>aroD</label>
    </interactant>
    <organismsDiffer>false</organismsDiffer>
    <experiments>2</experiments>
</comment>
<comment type="interaction">
    <interactant intactId="EBI-2206697">
        <id>Q97NX6</id>
    </interactant>
    <interactant intactId="EBI-2207053">
        <id>Q97SE5</id>
        <label>gatC</label>
    </interactant>
    <organismsDiffer>false</organismsDiffer>
    <experiments>2</experiments>
</comment>
<comment type="interaction">
    <interactant intactId="EBI-2206697">
        <id>Q97NX6</id>
    </interactant>
    <interactant intactId="EBI-2206949">
        <id>Q97NV3</id>
        <label>groES</label>
    </interactant>
    <organismsDiffer>false</organismsDiffer>
    <experiments>2</experiments>
</comment>
<comment type="interaction">
    <interactant intactId="EBI-2206697">
        <id>Q97NX6</id>
    </interactant>
    <interactant intactId="EBI-2207368">
        <id>Q97NX5</id>
        <label>scpA</label>
    </interactant>
    <organismsDiffer>false</organismsDiffer>
    <experiments>3</experiments>
</comment>
<comment type="interaction">
    <interactant intactId="EBI-2206697">
        <id>Q97NX6</id>
    </interactant>
    <interactant intactId="EBI-2206697">
        <id>Q97NX6</id>
        <label>scpB</label>
    </interactant>
    <organismsDiffer>false</organismsDiffer>
    <experiments>2</experiments>
</comment>
<comment type="interaction">
    <interactant intactId="EBI-2206697">
        <id>Q97NX6</id>
    </interactant>
    <interactant intactId="EBI-2207137">
        <id>P0A4J6</id>
        <label>sodA</label>
    </interactant>
    <organismsDiffer>false</organismsDiffer>
    <experiments>2</experiments>
</comment>
<comment type="interaction">
    <interactant intactId="EBI-2206697">
        <id>Q97NX6</id>
    </interactant>
    <interactant intactId="EBI-2207193">
        <id>A0A0H2UPY3</id>
        <label>SP_1103</label>
    </interactant>
    <organismsDiffer>false</organismsDiffer>
    <experiments>2</experiments>
</comment>
<comment type="interaction">
    <interactant intactId="EBI-2206697">
        <id>Q97NX6</id>
    </interactant>
    <interactant intactId="EBI-2206983">
        <id>Q97SR4</id>
        <label>uppS</label>
    </interactant>
    <organismsDiffer>false</organismsDiffer>
    <experiments>2</experiments>
</comment>
<comment type="subcellular location">
    <subcellularLocation>
        <location evidence="1">Cytoplasm</location>
    </subcellularLocation>
    <text evidence="1">Associated with two foci at the outer edges of the nucleoid region in young cells, and at four foci within both cell halves in older cells.</text>
</comment>
<comment type="similarity">
    <text evidence="1">Belongs to the ScpB family.</text>
</comment>
<accession>Q97NX6</accession>
<organism>
    <name type="scientific">Streptococcus pneumoniae serotype 4 (strain ATCC BAA-334 / TIGR4)</name>
    <dbReference type="NCBI Taxonomy" id="170187"/>
    <lineage>
        <taxon>Bacteria</taxon>
        <taxon>Bacillati</taxon>
        <taxon>Bacillota</taxon>
        <taxon>Bacilli</taxon>
        <taxon>Lactobacillales</taxon>
        <taxon>Streptococcaceae</taxon>
        <taxon>Streptococcus</taxon>
    </lineage>
</organism>